<protein>
    <recommendedName>
        <fullName>Basic phospholipase A2 PC20</fullName>
        <shortName>svPLA2</shortName>
        <ecNumber>3.1.1.4</ecNumber>
    </recommendedName>
    <alternativeName>
        <fullName>Phosphatidylcholine 2-acylhydrolase</fullName>
    </alternativeName>
</protein>
<sequence length="154" mass="17006">MYPAHLLVLLAVCVSLLGASAISPRPLNLIQFSQLIQCANKGKRATYHYMDYGCYCSKGGSGTPVDALDRCCKTHDDCYGQAEKKGCFPLLSLYNFACFPGAPQCGKGNTCQRFVCACDLKAALCFAKSPYNNNYNIDIKKKCQTLIYMRLQTQ</sequence>
<feature type="signal peptide" evidence="2">
    <location>
        <begin position="1"/>
        <end position="21"/>
    </location>
</feature>
<feature type="propeptide" id="PRO_0000022884" evidence="1">
    <location>
        <begin position="22"/>
        <end position="27"/>
    </location>
</feature>
<feature type="chain" id="PRO_0000022885" description="Basic phospholipase A2 PC20">
    <location>
        <begin position="28"/>
        <end position="154"/>
    </location>
</feature>
<feature type="active site" evidence="1">
    <location>
        <position position="75"/>
    </location>
</feature>
<feature type="active site" evidence="1">
    <location>
        <position position="119"/>
    </location>
</feature>
<feature type="binding site" evidence="1">
    <location>
        <position position="55"/>
    </location>
    <ligand>
        <name>Ca(2+)</name>
        <dbReference type="ChEBI" id="CHEBI:29108"/>
    </ligand>
</feature>
<feature type="binding site" evidence="1">
    <location>
        <position position="57"/>
    </location>
    <ligand>
        <name>Ca(2+)</name>
        <dbReference type="ChEBI" id="CHEBI:29108"/>
    </ligand>
</feature>
<feature type="binding site" evidence="1">
    <location>
        <position position="59"/>
    </location>
    <ligand>
        <name>Ca(2+)</name>
        <dbReference type="ChEBI" id="CHEBI:29108"/>
    </ligand>
</feature>
<feature type="binding site" evidence="1">
    <location>
        <position position="76"/>
    </location>
    <ligand>
        <name>Ca(2+)</name>
        <dbReference type="ChEBI" id="CHEBI:29108"/>
    </ligand>
</feature>
<feature type="disulfide bond" evidence="1">
    <location>
        <begin position="38"/>
        <end position="98"/>
    </location>
</feature>
<feature type="disulfide bond" evidence="1">
    <location>
        <begin position="54"/>
        <end position="143"/>
    </location>
</feature>
<feature type="disulfide bond" evidence="1">
    <location>
        <begin position="56"/>
        <end position="72"/>
    </location>
</feature>
<feature type="disulfide bond" evidence="1">
    <location>
        <begin position="71"/>
        <end position="125"/>
    </location>
</feature>
<feature type="disulfide bond" evidence="1">
    <location>
        <begin position="78"/>
        <end position="118"/>
    </location>
</feature>
<feature type="disulfide bond" evidence="1">
    <location>
        <begin position="87"/>
        <end position="111"/>
    </location>
</feature>
<feature type="disulfide bond" evidence="1">
    <location>
        <begin position="105"/>
        <end position="116"/>
    </location>
</feature>
<name>PA2BK_LATCO</name>
<proteinExistence type="inferred from homology"/>
<accession>Q8UUH7</accession>
<comment type="function">
    <text evidence="1">Snake venom phospholipase A2 (PLA2) that inhibits neuromuscular transmission by blocking acetylcholine release from the nerve termini. PLA2 catalyzes the calcium-dependent hydrolysis of the 2-acyl groups in 3-sn-phosphoglycerides (By similarity).</text>
</comment>
<comment type="catalytic activity">
    <reaction evidence="3 4">
        <text>a 1,2-diacyl-sn-glycero-3-phosphocholine + H2O = a 1-acyl-sn-glycero-3-phosphocholine + a fatty acid + H(+)</text>
        <dbReference type="Rhea" id="RHEA:15801"/>
        <dbReference type="ChEBI" id="CHEBI:15377"/>
        <dbReference type="ChEBI" id="CHEBI:15378"/>
        <dbReference type="ChEBI" id="CHEBI:28868"/>
        <dbReference type="ChEBI" id="CHEBI:57643"/>
        <dbReference type="ChEBI" id="CHEBI:58168"/>
        <dbReference type="EC" id="3.1.1.4"/>
    </reaction>
</comment>
<comment type="cofactor">
    <cofactor evidence="1">
        <name>Ca(2+)</name>
        <dbReference type="ChEBI" id="CHEBI:29108"/>
    </cofactor>
    <text evidence="1">Binds 1 Ca(2+) ion.</text>
</comment>
<comment type="subcellular location">
    <subcellularLocation>
        <location evidence="1">Secreted</location>
    </subcellularLocation>
</comment>
<comment type="tissue specificity">
    <text>Expressed by the venom gland.</text>
</comment>
<comment type="similarity">
    <text evidence="5">Belongs to the phospholipase A2 family. Group I subfamily. D49 sub-subfamily.</text>
</comment>
<keyword id="KW-0106">Calcium</keyword>
<keyword id="KW-1015">Disulfide bond</keyword>
<keyword id="KW-0378">Hydrolase</keyword>
<keyword id="KW-0442">Lipid degradation</keyword>
<keyword id="KW-0443">Lipid metabolism</keyword>
<keyword id="KW-0479">Metal-binding</keyword>
<keyword id="KW-0528">Neurotoxin</keyword>
<keyword id="KW-0638">Presynaptic neurotoxin</keyword>
<keyword id="KW-0964">Secreted</keyword>
<keyword id="KW-0732">Signal</keyword>
<keyword id="KW-0800">Toxin</keyword>
<reference key="1">
    <citation type="journal article" date="2002" name="Toxicon">
        <title>A comparative analysis of invaded sequences from group IA phospholipase A(2) genes provides evidence about the divergence period of genes groups and snake families.</title>
        <authorList>
            <person name="Fujimi T.J."/>
            <person name="Tsuchiya T."/>
            <person name="Tamiya T."/>
        </authorList>
    </citation>
    <scope>NUCLEOTIDE SEQUENCE [GENOMIC DNA]</scope>
    <source>
        <tissue>Liver</tissue>
    </source>
</reference>
<dbReference type="EC" id="3.1.1.4"/>
<dbReference type="EMBL" id="AB062448">
    <property type="protein sequence ID" value="BAB72255.1"/>
    <property type="molecule type" value="Genomic_DNA"/>
</dbReference>
<dbReference type="SMR" id="Q8UUH7"/>
<dbReference type="GO" id="GO:0005576">
    <property type="term" value="C:extracellular region"/>
    <property type="evidence" value="ECO:0007669"/>
    <property type="project" value="UniProtKB-SubCell"/>
</dbReference>
<dbReference type="GO" id="GO:0005509">
    <property type="term" value="F:calcium ion binding"/>
    <property type="evidence" value="ECO:0007669"/>
    <property type="project" value="InterPro"/>
</dbReference>
<dbReference type="GO" id="GO:0047498">
    <property type="term" value="F:calcium-dependent phospholipase A2 activity"/>
    <property type="evidence" value="ECO:0007669"/>
    <property type="project" value="TreeGrafter"/>
</dbReference>
<dbReference type="GO" id="GO:0005543">
    <property type="term" value="F:phospholipid binding"/>
    <property type="evidence" value="ECO:0007669"/>
    <property type="project" value="TreeGrafter"/>
</dbReference>
<dbReference type="GO" id="GO:0090729">
    <property type="term" value="F:toxin activity"/>
    <property type="evidence" value="ECO:0007669"/>
    <property type="project" value="UniProtKB-KW"/>
</dbReference>
<dbReference type="GO" id="GO:0050482">
    <property type="term" value="P:arachidonate secretion"/>
    <property type="evidence" value="ECO:0007669"/>
    <property type="project" value="InterPro"/>
</dbReference>
<dbReference type="GO" id="GO:0016042">
    <property type="term" value="P:lipid catabolic process"/>
    <property type="evidence" value="ECO:0007669"/>
    <property type="project" value="UniProtKB-KW"/>
</dbReference>
<dbReference type="GO" id="GO:0006644">
    <property type="term" value="P:phospholipid metabolic process"/>
    <property type="evidence" value="ECO:0007669"/>
    <property type="project" value="InterPro"/>
</dbReference>
<dbReference type="CDD" id="cd00125">
    <property type="entry name" value="PLA2c"/>
    <property type="match status" value="1"/>
</dbReference>
<dbReference type="FunFam" id="1.20.90.10:FF:000007">
    <property type="entry name" value="Acidic phospholipase A2"/>
    <property type="match status" value="1"/>
</dbReference>
<dbReference type="Gene3D" id="1.20.90.10">
    <property type="entry name" value="Phospholipase A2 domain"/>
    <property type="match status" value="1"/>
</dbReference>
<dbReference type="InterPro" id="IPR001211">
    <property type="entry name" value="PLipase_A2"/>
</dbReference>
<dbReference type="InterPro" id="IPR033112">
    <property type="entry name" value="PLipase_A2_Asp_AS"/>
</dbReference>
<dbReference type="InterPro" id="IPR016090">
    <property type="entry name" value="PLipase_A2_dom"/>
</dbReference>
<dbReference type="InterPro" id="IPR036444">
    <property type="entry name" value="PLipase_A2_dom_sf"/>
</dbReference>
<dbReference type="InterPro" id="IPR033113">
    <property type="entry name" value="PLipase_A2_His_AS"/>
</dbReference>
<dbReference type="PANTHER" id="PTHR11716:SF106">
    <property type="entry name" value="PHOSPHOLIPASE A2 A2-ACTITOXIN-UCS2A-LIKE"/>
    <property type="match status" value="1"/>
</dbReference>
<dbReference type="PANTHER" id="PTHR11716">
    <property type="entry name" value="PHOSPHOLIPASE A2 FAMILY MEMBER"/>
    <property type="match status" value="1"/>
</dbReference>
<dbReference type="Pfam" id="PF00068">
    <property type="entry name" value="Phospholip_A2_1"/>
    <property type="match status" value="1"/>
</dbReference>
<dbReference type="PRINTS" id="PR00389">
    <property type="entry name" value="PHPHLIPASEA2"/>
</dbReference>
<dbReference type="SMART" id="SM00085">
    <property type="entry name" value="PA2c"/>
    <property type="match status" value="1"/>
</dbReference>
<dbReference type="SUPFAM" id="SSF48619">
    <property type="entry name" value="Phospholipase A2, PLA2"/>
    <property type="match status" value="1"/>
</dbReference>
<dbReference type="PROSITE" id="PS00119">
    <property type="entry name" value="PA2_ASP"/>
    <property type="match status" value="1"/>
</dbReference>
<dbReference type="PROSITE" id="PS00118">
    <property type="entry name" value="PA2_HIS"/>
    <property type="match status" value="1"/>
</dbReference>
<evidence type="ECO:0000250" key="1"/>
<evidence type="ECO:0000255" key="2"/>
<evidence type="ECO:0000255" key="3">
    <source>
        <dbReference type="PROSITE-ProRule" id="PRU10035"/>
    </source>
</evidence>
<evidence type="ECO:0000255" key="4">
    <source>
        <dbReference type="PROSITE-ProRule" id="PRU10036"/>
    </source>
</evidence>
<evidence type="ECO:0000305" key="5"/>
<organism>
    <name type="scientific">Laticauda colubrina</name>
    <name type="common">Yellow-lipped sea krait</name>
    <name type="synonym">Banded sea krait</name>
    <dbReference type="NCBI Taxonomy" id="8628"/>
    <lineage>
        <taxon>Eukaryota</taxon>
        <taxon>Metazoa</taxon>
        <taxon>Chordata</taxon>
        <taxon>Craniata</taxon>
        <taxon>Vertebrata</taxon>
        <taxon>Euteleostomi</taxon>
        <taxon>Lepidosauria</taxon>
        <taxon>Squamata</taxon>
        <taxon>Bifurcata</taxon>
        <taxon>Unidentata</taxon>
        <taxon>Episquamata</taxon>
        <taxon>Toxicofera</taxon>
        <taxon>Serpentes</taxon>
        <taxon>Colubroidea</taxon>
        <taxon>Elapidae</taxon>
        <taxon>Laticaudinae</taxon>
        <taxon>Laticauda</taxon>
    </lineage>
</organism>